<comment type="function">
    <text evidence="1">Phosphorolytic 3'-5' exoribonuclease that plays an important role in tRNA 3'-end maturation. Removes nucleotide residues following the 3'-CCA terminus of tRNAs; can also add nucleotides to the ends of RNA molecules by using nucleoside diphosphates as substrates, but this may not be physiologically important. Probably plays a role in initiation of 16S rRNA degradation (leading to ribosome degradation) during starvation.</text>
</comment>
<comment type="catalytic activity">
    <reaction evidence="1">
        <text>tRNA(n+1) + phosphate = tRNA(n) + a ribonucleoside 5'-diphosphate</text>
        <dbReference type="Rhea" id="RHEA:10628"/>
        <dbReference type="Rhea" id="RHEA-COMP:17343"/>
        <dbReference type="Rhea" id="RHEA-COMP:17344"/>
        <dbReference type="ChEBI" id="CHEBI:43474"/>
        <dbReference type="ChEBI" id="CHEBI:57930"/>
        <dbReference type="ChEBI" id="CHEBI:173114"/>
        <dbReference type="EC" id="2.7.7.56"/>
    </reaction>
</comment>
<comment type="subunit">
    <text evidence="1">Homohexameric ring arranged as a trimer of dimers.</text>
</comment>
<comment type="similarity">
    <text evidence="1">Belongs to the RNase PH family.</text>
</comment>
<evidence type="ECO:0000255" key="1">
    <source>
        <dbReference type="HAMAP-Rule" id="MF_00564"/>
    </source>
</evidence>
<dbReference type="EC" id="2.7.7.56" evidence="1"/>
<dbReference type="EMBL" id="CU633749">
    <property type="protein sequence ID" value="CAQ68913.1"/>
    <property type="molecule type" value="Genomic_DNA"/>
</dbReference>
<dbReference type="RefSeq" id="WP_012352247.1">
    <property type="nucleotide sequence ID" value="NC_010528.1"/>
</dbReference>
<dbReference type="SMR" id="B3R3N0"/>
<dbReference type="GeneID" id="29761352"/>
<dbReference type="KEGG" id="cti:RALTA_A0946"/>
<dbReference type="eggNOG" id="COG0689">
    <property type="taxonomic scope" value="Bacteria"/>
</dbReference>
<dbReference type="HOGENOM" id="CLU_050858_0_0_4"/>
<dbReference type="BioCyc" id="CTAI977880:RALTA_RS04475-MONOMER"/>
<dbReference type="Proteomes" id="UP000001692">
    <property type="component" value="Chromosome 1"/>
</dbReference>
<dbReference type="GO" id="GO:0000175">
    <property type="term" value="F:3'-5'-RNA exonuclease activity"/>
    <property type="evidence" value="ECO:0007669"/>
    <property type="project" value="UniProtKB-UniRule"/>
</dbReference>
<dbReference type="GO" id="GO:0000049">
    <property type="term" value="F:tRNA binding"/>
    <property type="evidence" value="ECO:0007669"/>
    <property type="project" value="UniProtKB-UniRule"/>
</dbReference>
<dbReference type="GO" id="GO:0009022">
    <property type="term" value="F:tRNA nucleotidyltransferase activity"/>
    <property type="evidence" value="ECO:0007669"/>
    <property type="project" value="UniProtKB-UniRule"/>
</dbReference>
<dbReference type="GO" id="GO:0016075">
    <property type="term" value="P:rRNA catabolic process"/>
    <property type="evidence" value="ECO:0007669"/>
    <property type="project" value="UniProtKB-UniRule"/>
</dbReference>
<dbReference type="GO" id="GO:0006364">
    <property type="term" value="P:rRNA processing"/>
    <property type="evidence" value="ECO:0007669"/>
    <property type="project" value="UniProtKB-KW"/>
</dbReference>
<dbReference type="GO" id="GO:0008033">
    <property type="term" value="P:tRNA processing"/>
    <property type="evidence" value="ECO:0007669"/>
    <property type="project" value="UniProtKB-UniRule"/>
</dbReference>
<dbReference type="CDD" id="cd11362">
    <property type="entry name" value="RNase_PH_bact"/>
    <property type="match status" value="1"/>
</dbReference>
<dbReference type="FunFam" id="3.30.230.70:FF:000003">
    <property type="entry name" value="Ribonuclease PH"/>
    <property type="match status" value="1"/>
</dbReference>
<dbReference type="Gene3D" id="3.30.230.70">
    <property type="entry name" value="GHMP Kinase, N-terminal domain"/>
    <property type="match status" value="1"/>
</dbReference>
<dbReference type="HAMAP" id="MF_00564">
    <property type="entry name" value="RNase_PH"/>
    <property type="match status" value="1"/>
</dbReference>
<dbReference type="InterPro" id="IPR001247">
    <property type="entry name" value="ExoRNase_PH_dom1"/>
</dbReference>
<dbReference type="InterPro" id="IPR015847">
    <property type="entry name" value="ExoRNase_PH_dom2"/>
</dbReference>
<dbReference type="InterPro" id="IPR036345">
    <property type="entry name" value="ExoRNase_PH_dom2_sf"/>
</dbReference>
<dbReference type="InterPro" id="IPR027408">
    <property type="entry name" value="PNPase/RNase_PH_dom_sf"/>
</dbReference>
<dbReference type="InterPro" id="IPR020568">
    <property type="entry name" value="Ribosomal_Su5_D2-typ_SF"/>
</dbReference>
<dbReference type="InterPro" id="IPR050080">
    <property type="entry name" value="RNase_PH"/>
</dbReference>
<dbReference type="InterPro" id="IPR002381">
    <property type="entry name" value="RNase_PH_bac-type"/>
</dbReference>
<dbReference type="InterPro" id="IPR018336">
    <property type="entry name" value="RNase_PH_CS"/>
</dbReference>
<dbReference type="NCBIfam" id="TIGR01966">
    <property type="entry name" value="RNasePH"/>
    <property type="match status" value="1"/>
</dbReference>
<dbReference type="PANTHER" id="PTHR11953">
    <property type="entry name" value="EXOSOME COMPLEX COMPONENT"/>
    <property type="match status" value="1"/>
</dbReference>
<dbReference type="PANTHER" id="PTHR11953:SF0">
    <property type="entry name" value="EXOSOME COMPLEX COMPONENT RRP41"/>
    <property type="match status" value="1"/>
</dbReference>
<dbReference type="Pfam" id="PF01138">
    <property type="entry name" value="RNase_PH"/>
    <property type="match status" value="1"/>
</dbReference>
<dbReference type="Pfam" id="PF03725">
    <property type="entry name" value="RNase_PH_C"/>
    <property type="match status" value="1"/>
</dbReference>
<dbReference type="SUPFAM" id="SSF55666">
    <property type="entry name" value="Ribonuclease PH domain 2-like"/>
    <property type="match status" value="1"/>
</dbReference>
<dbReference type="SUPFAM" id="SSF54211">
    <property type="entry name" value="Ribosomal protein S5 domain 2-like"/>
    <property type="match status" value="1"/>
</dbReference>
<dbReference type="PROSITE" id="PS01277">
    <property type="entry name" value="RIBONUCLEASE_PH"/>
    <property type="match status" value="1"/>
</dbReference>
<proteinExistence type="inferred from homology"/>
<name>RNPH_CUPTR</name>
<organism>
    <name type="scientific">Cupriavidus taiwanensis (strain DSM 17343 / BCRC 17206 / CCUG 44338 / CIP 107171 / LMG 19424 / R1)</name>
    <name type="common">Ralstonia taiwanensis (strain LMG 19424)</name>
    <dbReference type="NCBI Taxonomy" id="977880"/>
    <lineage>
        <taxon>Bacteria</taxon>
        <taxon>Pseudomonadati</taxon>
        <taxon>Pseudomonadota</taxon>
        <taxon>Betaproteobacteria</taxon>
        <taxon>Burkholderiales</taxon>
        <taxon>Burkholderiaceae</taxon>
        <taxon>Cupriavidus</taxon>
    </lineage>
</organism>
<keyword id="KW-0548">Nucleotidyltransferase</keyword>
<keyword id="KW-0694">RNA-binding</keyword>
<keyword id="KW-0698">rRNA processing</keyword>
<keyword id="KW-0808">Transferase</keyword>
<keyword id="KW-0819">tRNA processing</keyword>
<keyword id="KW-0820">tRNA-binding</keyword>
<feature type="chain" id="PRO_1000129334" description="Ribonuclease PH">
    <location>
        <begin position="1"/>
        <end position="239"/>
    </location>
</feature>
<feature type="binding site" evidence="1">
    <location>
        <position position="86"/>
    </location>
    <ligand>
        <name>phosphate</name>
        <dbReference type="ChEBI" id="CHEBI:43474"/>
        <note>substrate</note>
    </ligand>
</feature>
<feature type="binding site" evidence="1">
    <location>
        <begin position="124"/>
        <end position="126"/>
    </location>
    <ligand>
        <name>phosphate</name>
        <dbReference type="ChEBI" id="CHEBI:43474"/>
        <note>substrate</note>
    </ligand>
</feature>
<protein>
    <recommendedName>
        <fullName evidence="1">Ribonuclease PH</fullName>
        <shortName evidence="1">RNase PH</shortName>
        <ecNumber evidence="1">2.7.7.56</ecNumber>
    </recommendedName>
    <alternativeName>
        <fullName evidence="1">tRNA nucleotidyltransferase</fullName>
    </alternativeName>
</protein>
<accession>B3R3N0</accession>
<sequence>MRPSGRAADALRSISLTRHYTRHAEGSVLCAFGDTKVLCTASVLAKVPPHKKGSGEGWVTAEYGMLPRATHTRSDREAARGKQTGRTQEIQRLIGRAMRSVFDLAALGEYTLHLDCDVLQADGGTRTAAITGAFVAAHDAVATMLRDGLIAASPIRDHVAAVSVGMVDGVPVLDLDYAEDSNCDTDMNVVMTGSGGFVEVQGTAEGAPFSRADLDAMTRLAEAGIARLVQYQREALGLA</sequence>
<gene>
    <name evidence="1" type="primary">rph</name>
    <name type="ordered locus">RALTA_A0946</name>
</gene>
<reference key="1">
    <citation type="journal article" date="2008" name="Genome Res.">
        <title>Genome sequence of the beta-rhizobium Cupriavidus taiwanensis and comparative genomics of rhizobia.</title>
        <authorList>
            <person name="Amadou C."/>
            <person name="Pascal G."/>
            <person name="Mangenot S."/>
            <person name="Glew M."/>
            <person name="Bontemps C."/>
            <person name="Capela D."/>
            <person name="Carrere S."/>
            <person name="Cruveiller S."/>
            <person name="Dossat C."/>
            <person name="Lajus A."/>
            <person name="Marchetti M."/>
            <person name="Poinsot V."/>
            <person name="Rouy Z."/>
            <person name="Servin B."/>
            <person name="Saad M."/>
            <person name="Schenowitz C."/>
            <person name="Barbe V."/>
            <person name="Batut J."/>
            <person name="Medigue C."/>
            <person name="Masson-Boivin C."/>
        </authorList>
    </citation>
    <scope>NUCLEOTIDE SEQUENCE [LARGE SCALE GENOMIC DNA]</scope>
    <source>
        <strain>DSM 17343 / BCRC 17206 / CCUG 44338 / CIP 107171 / LMG 19424 / R1</strain>
    </source>
</reference>